<keyword id="KW-0210">Decarboxylase</keyword>
<keyword id="KW-0456">Lyase</keyword>
<keyword id="KW-1185">Reference proteome</keyword>
<keyword id="KW-0704">Schiff base</keyword>
<protein>
    <recommendedName>
        <fullName evidence="1">Acetoacetate decarboxylase 1</fullName>
        <shortName evidence="1">AAD 1</shortName>
        <shortName evidence="1">ADC 1</shortName>
        <ecNumber evidence="1">4.1.1.4</ecNumber>
    </recommendedName>
</protein>
<proteinExistence type="inferred from homology"/>
<evidence type="ECO:0000255" key="1">
    <source>
        <dbReference type="HAMAP-Rule" id="MF_00597"/>
    </source>
</evidence>
<organism>
    <name type="scientific">Bradyrhizobium diazoefficiens (strain JCM 10833 / BCRC 13528 / IAM 13628 / NBRC 14792 / USDA 110)</name>
    <dbReference type="NCBI Taxonomy" id="224911"/>
    <lineage>
        <taxon>Bacteria</taxon>
        <taxon>Pseudomonadati</taxon>
        <taxon>Pseudomonadota</taxon>
        <taxon>Alphaproteobacteria</taxon>
        <taxon>Hyphomicrobiales</taxon>
        <taxon>Nitrobacteraceae</taxon>
        <taxon>Bradyrhizobium</taxon>
    </lineage>
</organism>
<accession>Q89CN4</accession>
<feature type="chain" id="PRO_0000207099" description="Acetoacetate decarboxylase 1">
    <location>
        <begin position="1"/>
        <end position="250"/>
    </location>
</feature>
<feature type="active site" description="Schiff-base intermediate with acetoacetate" evidence="1">
    <location>
        <position position="120"/>
    </location>
</feature>
<name>ADC1_BRADU</name>
<sequence>MGPPMKIEDVRRTAYSMPLTNPAFPPGPYRFFDREYFIITYRTDPEALATIVPEPLEVAEPLVKYEFIRMPDSTGFGDYTETGQVIPVRFKGEEGGYTHAMYLDDEAPIAGGRELWGFPKKLARPKIEVESDVLVGSLHYGSVLCASATMGYKHHKVDHDTVLKSMASPNFILKIIPHVDGSPRICELVRFHLDDVVLKEAWTGPAALGLFPHALCDVARLPVREVISALHFKADLTLGLGSVAFDYMAK</sequence>
<comment type="function">
    <text evidence="1">Catalyzes the conversion of acetoacetate to acetone and carbon dioxide.</text>
</comment>
<comment type="catalytic activity">
    <reaction evidence="1">
        <text>acetoacetate + H(+) = acetone + CO2</text>
        <dbReference type="Rhea" id="RHEA:19729"/>
        <dbReference type="ChEBI" id="CHEBI:13705"/>
        <dbReference type="ChEBI" id="CHEBI:15347"/>
        <dbReference type="ChEBI" id="CHEBI:15378"/>
        <dbReference type="ChEBI" id="CHEBI:16526"/>
        <dbReference type="EC" id="4.1.1.4"/>
    </reaction>
</comment>
<comment type="similarity">
    <text evidence="1">Belongs to the ADC family.</text>
</comment>
<reference key="1">
    <citation type="journal article" date="2002" name="DNA Res.">
        <title>Complete genomic sequence of nitrogen-fixing symbiotic bacterium Bradyrhizobium japonicum USDA110.</title>
        <authorList>
            <person name="Kaneko T."/>
            <person name="Nakamura Y."/>
            <person name="Sato S."/>
            <person name="Minamisawa K."/>
            <person name="Uchiumi T."/>
            <person name="Sasamoto S."/>
            <person name="Watanabe A."/>
            <person name="Idesawa K."/>
            <person name="Iriguchi M."/>
            <person name="Kawashima K."/>
            <person name="Kohara M."/>
            <person name="Matsumoto M."/>
            <person name="Shimpo S."/>
            <person name="Tsuruoka H."/>
            <person name="Wada T."/>
            <person name="Yamada M."/>
            <person name="Tabata S."/>
        </authorList>
    </citation>
    <scope>NUCLEOTIDE SEQUENCE [LARGE SCALE GENOMIC DNA]</scope>
    <source>
        <strain>JCM 10833 / BCRC 13528 / IAM 13628 / NBRC 14792 / USDA 110</strain>
    </source>
</reference>
<gene>
    <name evidence="1" type="primary">adc1</name>
    <name type="ordered locus">bll7763</name>
</gene>
<dbReference type="EC" id="4.1.1.4" evidence="1"/>
<dbReference type="EMBL" id="BA000040">
    <property type="protein sequence ID" value="BAC53028.1"/>
    <property type="molecule type" value="Genomic_DNA"/>
</dbReference>
<dbReference type="RefSeq" id="NP_774403.1">
    <property type="nucleotide sequence ID" value="NC_004463.1"/>
</dbReference>
<dbReference type="SMR" id="Q89CN4"/>
<dbReference type="STRING" id="224911.AAV28_36510"/>
<dbReference type="EnsemblBacteria" id="BAC53028">
    <property type="protein sequence ID" value="BAC53028"/>
    <property type="gene ID" value="BAC53028"/>
</dbReference>
<dbReference type="KEGG" id="bja:bll7763"/>
<dbReference type="PATRIC" id="fig|224911.5.peg.7984"/>
<dbReference type="eggNOG" id="COG4689">
    <property type="taxonomic scope" value="Bacteria"/>
</dbReference>
<dbReference type="HOGENOM" id="CLU_077089_0_0_5"/>
<dbReference type="InParanoid" id="Q89CN4"/>
<dbReference type="OrthoDB" id="1633687at2"/>
<dbReference type="PhylomeDB" id="Q89CN4"/>
<dbReference type="Proteomes" id="UP000002526">
    <property type="component" value="Chromosome"/>
</dbReference>
<dbReference type="GO" id="GO:0047602">
    <property type="term" value="F:acetoacetate decarboxylase activity"/>
    <property type="evidence" value="ECO:0007669"/>
    <property type="project" value="UniProtKB-UniRule"/>
</dbReference>
<dbReference type="Gene3D" id="2.40.400.10">
    <property type="entry name" value="Acetoacetate decarboxylase-like"/>
    <property type="match status" value="1"/>
</dbReference>
<dbReference type="HAMAP" id="MF_00597">
    <property type="entry name" value="ADC"/>
    <property type="match status" value="1"/>
</dbReference>
<dbReference type="InterPro" id="IPR010451">
    <property type="entry name" value="Acetoacetate_decarboxylase"/>
</dbReference>
<dbReference type="InterPro" id="IPR023653">
    <property type="entry name" value="Acetoacetate_decarboxylase_bac"/>
</dbReference>
<dbReference type="InterPro" id="IPR023375">
    <property type="entry name" value="ADC_dom_sf"/>
</dbReference>
<dbReference type="NCBIfam" id="NF002614">
    <property type="entry name" value="PRK02265.1"/>
    <property type="match status" value="1"/>
</dbReference>
<dbReference type="Pfam" id="PF06314">
    <property type="entry name" value="ADC"/>
    <property type="match status" value="1"/>
</dbReference>
<dbReference type="SUPFAM" id="SSF160104">
    <property type="entry name" value="Acetoacetate decarboxylase-like"/>
    <property type="match status" value="1"/>
</dbReference>